<feature type="chain" id="PRO_1000063071" description="Imidazole glycerol phosphate synthase subunit HisF">
    <location>
        <begin position="1"/>
        <end position="261"/>
    </location>
</feature>
<feature type="active site" evidence="1">
    <location>
        <position position="11"/>
    </location>
</feature>
<feature type="active site" evidence="1">
    <location>
        <position position="130"/>
    </location>
</feature>
<keyword id="KW-0028">Amino-acid biosynthesis</keyword>
<keyword id="KW-0963">Cytoplasm</keyword>
<keyword id="KW-0368">Histidine biosynthesis</keyword>
<keyword id="KW-0456">Lyase</keyword>
<keyword id="KW-1185">Reference proteome</keyword>
<dbReference type="EC" id="4.3.2.10" evidence="1"/>
<dbReference type="EMBL" id="CP000264">
    <property type="protein sequence ID" value="ABD55712.1"/>
    <property type="molecule type" value="Genomic_DNA"/>
</dbReference>
<dbReference type="RefSeq" id="WP_011455916.1">
    <property type="nucleotide sequence ID" value="NC_007802.1"/>
</dbReference>
<dbReference type="SMR" id="Q28NK0"/>
<dbReference type="STRING" id="290400.Jann_2795"/>
<dbReference type="KEGG" id="jan:Jann_2795"/>
<dbReference type="eggNOG" id="COG0107">
    <property type="taxonomic scope" value="Bacteria"/>
</dbReference>
<dbReference type="HOGENOM" id="CLU_048577_4_0_5"/>
<dbReference type="OrthoDB" id="9781903at2"/>
<dbReference type="UniPathway" id="UPA00031">
    <property type="reaction ID" value="UER00010"/>
</dbReference>
<dbReference type="Proteomes" id="UP000008326">
    <property type="component" value="Chromosome"/>
</dbReference>
<dbReference type="GO" id="GO:0005737">
    <property type="term" value="C:cytoplasm"/>
    <property type="evidence" value="ECO:0007669"/>
    <property type="project" value="UniProtKB-SubCell"/>
</dbReference>
<dbReference type="GO" id="GO:0000107">
    <property type="term" value="F:imidazoleglycerol-phosphate synthase activity"/>
    <property type="evidence" value="ECO:0007669"/>
    <property type="project" value="UniProtKB-UniRule"/>
</dbReference>
<dbReference type="GO" id="GO:0016829">
    <property type="term" value="F:lyase activity"/>
    <property type="evidence" value="ECO:0007669"/>
    <property type="project" value="UniProtKB-KW"/>
</dbReference>
<dbReference type="GO" id="GO:0000105">
    <property type="term" value="P:L-histidine biosynthetic process"/>
    <property type="evidence" value="ECO:0007669"/>
    <property type="project" value="UniProtKB-UniRule"/>
</dbReference>
<dbReference type="CDD" id="cd04731">
    <property type="entry name" value="HisF"/>
    <property type="match status" value="1"/>
</dbReference>
<dbReference type="FunFam" id="3.20.20.70:FF:000006">
    <property type="entry name" value="Imidazole glycerol phosphate synthase subunit HisF"/>
    <property type="match status" value="1"/>
</dbReference>
<dbReference type="Gene3D" id="3.20.20.70">
    <property type="entry name" value="Aldolase class I"/>
    <property type="match status" value="1"/>
</dbReference>
<dbReference type="HAMAP" id="MF_01013">
    <property type="entry name" value="HisF"/>
    <property type="match status" value="1"/>
</dbReference>
<dbReference type="InterPro" id="IPR013785">
    <property type="entry name" value="Aldolase_TIM"/>
</dbReference>
<dbReference type="InterPro" id="IPR006062">
    <property type="entry name" value="His_biosynth"/>
</dbReference>
<dbReference type="InterPro" id="IPR004651">
    <property type="entry name" value="HisF"/>
</dbReference>
<dbReference type="InterPro" id="IPR050064">
    <property type="entry name" value="IGPS_HisA/HisF"/>
</dbReference>
<dbReference type="InterPro" id="IPR011060">
    <property type="entry name" value="RibuloseP-bd_barrel"/>
</dbReference>
<dbReference type="NCBIfam" id="TIGR00735">
    <property type="entry name" value="hisF"/>
    <property type="match status" value="1"/>
</dbReference>
<dbReference type="PANTHER" id="PTHR21235:SF2">
    <property type="entry name" value="IMIDAZOLE GLYCEROL PHOSPHATE SYNTHASE HISHF"/>
    <property type="match status" value="1"/>
</dbReference>
<dbReference type="PANTHER" id="PTHR21235">
    <property type="entry name" value="IMIDAZOLE GLYCEROL PHOSPHATE SYNTHASE SUBUNIT HISF/H IGP SYNTHASE SUBUNIT HISF/H"/>
    <property type="match status" value="1"/>
</dbReference>
<dbReference type="Pfam" id="PF00977">
    <property type="entry name" value="His_biosynth"/>
    <property type="match status" value="1"/>
</dbReference>
<dbReference type="SUPFAM" id="SSF51366">
    <property type="entry name" value="Ribulose-phoshate binding barrel"/>
    <property type="match status" value="1"/>
</dbReference>
<evidence type="ECO:0000255" key="1">
    <source>
        <dbReference type="HAMAP-Rule" id="MF_01013"/>
    </source>
</evidence>
<reference key="1">
    <citation type="submission" date="2006-02" db="EMBL/GenBank/DDBJ databases">
        <title>Complete sequence of chromosome of Jannaschia sp. CCS1.</title>
        <authorList>
            <consortium name="US DOE Joint Genome Institute"/>
            <person name="Copeland A."/>
            <person name="Lucas S."/>
            <person name="Lapidus A."/>
            <person name="Barry K."/>
            <person name="Detter J.C."/>
            <person name="Glavina del Rio T."/>
            <person name="Hammon N."/>
            <person name="Israni S."/>
            <person name="Pitluck S."/>
            <person name="Brettin T."/>
            <person name="Bruce D."/>
            <person name="Han C."/>
            <person name="Tapia R."/>
            <person name="Gilna P."/>
            <person name="Chertkov O."/>
            <person name="Saunders E."/>
            <person name="Schmutz J."/>
            <person name="Larimer F."/>
            <person name="Land M."/>
            <person name="Kyrpides N."/>
            <person name="Lykidis A."/>
            <person name="Moran M.A."/>
            <person name="Belas R."/>
            <person name="Ye W."/>
            <person name="Buchan A."/>
            <person name="Gonzalez J.M."/>
            <person name="Schell M.A."/>
            <person name="Richardson P."/>
        </authorList>
    </citation>
    <scope>NUCLEOTIDE SEQUENCE [LARGE SCALE GENOMIC DNA]</scope>
    <source>
        <strain>CCS1</strain>
    </source>
</reference>
<sequence>MLKTRIIPCLDVAEGRTVKGVNFVDLIDAGDPVEQARAYDLAGADELCFLDIKATHENRGTMYDLATRTAEQCFMPLTIGGGVRTVDDVRNLLLAGADKVSFNSAAVADPDCVARAADKFGSQCIVVAIDAKTVRPPAPLRGDPGRWEIFTHGGRKPTGIDAVEFAKTVVAKGAGEILLTSMDRDGTKAGFNLPLTRAVSDAVPVPVIASGGVGTLDHLVEGVTQGGASAVLAASIFHFGTYTIGEAKAHMAKAGIPVRLT</sequence>
<name>HIS6_JANSC</name>
<gene>
    <name evidence="1" type="primary">hisF</name>
    <name type="ordered locus">Jann_2795</name>
</gene>
<proteinExistence type="inferred from homology"/>
<protein>
    <recommendedName>
        <fullName evidence="1">Imidazole glycerol phosphate synthase subunit HisF</fullName>
        <ecNumber evidence="1">4.3.2.10</ecNumber>
    </recommendedName>
    <alternativeName>
        <fullName evidence="1">IGP synthase cyclase subunit</fullName>
    </alternativeName>
    <alternativeName>
        <fullName evidence="1">IGP synthase subunit HisF</fullName>
    </alternativeName>
    <alternativeName>
        <fullName evidence="1">ImGP synthase subunit HisF</fullName>
        <shortName evidence="1">IGPS subunit HisF</shortName>
    </alternativeName>
</protein>
<accession>Q28NK0</accession>
<organism>
    <name type="scientific">Jannaschia sp. (strain CCS1)</name>
    <dbReference type="NCBI Taxonomy" id="290400"/>
    <lineage>
        <taxon>Bacteria</taxon>
        <taxon>Pseudomonadati</taxon>
        <taxon>Pseudomonadota</taxon>
        <taxon>Alphaproteobacteria</taxon>
        <taxon>Rhodobacterales</taxon>
        <taxon>Roseobacteraceae</taxon>
        <taxon>Jannaschia</taxon>
    </lineage>
</organism>
<comment type="function">
    <text evidence="1">IGPS catalyzes the conversion of PRFAR and glutamine to IGP, AICAR and glutamate. The HisF subunit catalyzes the cyclization activity that produces IGP and AICAR from PRFAR using the ammonia provided by the HisH subunit.</text>
</comment>
<comment type="catalytic activity">
    <reaction evidence="1">
        <text>5-[(5-phospho-1-deoxy-D-ribulos-1-ylimino)methylamino]-1-(5-phospho-beta-D-ribosyl)imidazole-4-carboxamide + L-glutamine = D-erythro-1-(imidazol-4-yl)glycerol 3-phosphate + 5-amino-1-(5-phospho-beta-D-ribosyl)imidazole-4-carboxamide + L-glutamate + H(+)</text>
        <dbReference type="Rhea" id="RHEA:24793"/>
        <dbReference type="ChEBI" id="CHEBI:15378"/>
        <dbReference type="ChEBI" id="CHEBI:29985"/>
        <dbReference type="ChEBI" id="CHEBI:58278"/>
        <dbReference type="ChEBI" id="CHEBI:58359"/>
        <dbReference type="ChEBI" id="CHEBI:58475"/>
        <dbReference type="ChEBI" id="CHEBI:58525"/>
        <dbReference type="EC" id="4.3.2.10"/>
    </reaction>
</comment>
<comment type="pathway">
    <text evidence="1">Amino-acid biosynthesis; L-histidine biosynthesis; L-histidine from 5-phospho-alpha-D-ribose 1-diphosphate: step 5/9.</text>
</comment>
<comment type="subunit">
    <text evidence="1">Heterodimer of HisH and HisF.</text>
</comment>
<comment type="subcellular location">
    <subcellularLocation>
        <location evidence="1">Cytoplasm</location>
    </subcellularLocation>
</comment>
<comment type="similarity">
    <text evidence="1">Belongs to the HisA/HisF family.</text>
</comment>